<dbReference type="EC" id="2.6.1.9"/>
<dbReference type="EMBL" id="AE004091">
    <property type="protein sequence ID" value="AAG07835.1"/>
    <property type="molecule type" value="Genomic_DNA"/>
</dbReference>
<dbReference type="PIR" id="C83089">
    <property type="entry name" value="C83089"/>
</dbReference>
<dbReference type="RefSeq" id="NP_253137.1">
    <property type="nucleotide sequence ID" value="NC_002516.2"/>
</dbReference>
<dbReference type="SMR" id="Q9HVX0"/>
<dbReference type="FunCoup" id="Q9HVX0">
    <property type="interactions" value="597"/>
</dbReference>
<dbReference type="STRING" id="208964.PA4447"/>
<dbReference type="PaxDb" id="208964-PA4447"/>
<dbReference type="GeneID" id="880991"/>
<dbReference type="KEGG" id="pae:PA4447"/>
<dbReference type="PATRIC" id="fig|208964.12.peg.4656"/>
<dbReference type="PseudoCAP" id="PA4447"/>
<dbReference type="HOGENOM" id="CLU_017584_3_0_6"/>
<dbReference type="InParanoid" id="Q9HVX0"/>
<dbReference type="OrthoDB" id="9809616at2"/>
<dbReference type="PhylomeDB" id="Q9HVX0"/>
<dbReference type="BioCyc" id="PAER208964:G1FZ6-4535-MONOMER"/>
<dbReference type="UniPathway" id="UPA00031">
    <property type="reaction ID" value="UER00012"/>
</dbReference>
<dbReference type="Proteomes" id="UP000002438">
    <property type="component" value="Chromosome"/>
</dbReference>
<dbReference type="GO" id="GO:0004400">
    <property type="term" value="F:histidinol-phosphate transaminase activity"/>
    <property type="evidence" value="ECO:0007669"/>
    <property type="project" value="UniProtKB-UniRule"/>
</dbReference>
<dbReference type="GO" id="GO:0030170">
    <property type="term" value="F:pyridoxal phosphate binding"/>
    <property type="evidence" value="ECO:0007669"/>
    <property type="project" value="InterPro"/>
</dbReference>
<dbReference type="GO" id="GO:0000105">
    <property type="term" value="P:L-histidine biosynthetic process"/>
    <property type="evidence" value="ECO:0007669"/>
    <property type="project" value="UniProtKB-UniRule"/>
</dbReference>
<dbReference type="CDD" id="cd00609">
    <property type="entry name" value="AAT_like"/>
    <property type="match status" value="1"/>
</dbReference>
<dbReference type="Gene3D" id="3.90.1150.10">
    <property type="entry name" value="Aspartate Aminotransferase, domain 1"/>
    <property type="match status" value="1"/>
</dbReference>
<dbReference type="Gene3D" id="3.40.640.10">
    <property type="entry name" value="Type I PLP-dependent aspartate aminotransferase-like (Major domain)"/>
    <property type="match status" value="1"/>
</dbReference>
<dbReference type="HAMAP" id="MF_01023">
    <property type="entry name" value="HisC_aminotrans_2"/>
    <property type="match status" value="1"/>
</dbReference>
<dbReference type="InterPro" id="IPR001917">
    <property type="entry name" value="Aminotrans_II_pyridoxalP_BS"/>
</dbReference>
<dbReference type="InterPro" id="IPR004839">
    <property type="entry name" value="Aminotransferase_I/II_large"/>
</dbReference>
<dbReference type="InterPro" id="IPR005861">
    <property type="entry name" value="HisP_aminotrans"/>
</dbReference>
<dbReference type="InterPro" id="IPR050106">
    <property type="entry name" value="HistidinolP_aminotransfase"/>
</dbReference>
<dbReference type="InterPro" id="IPR015424">
    <property type="entry name" value="PyrdxlP-dep_Trfase"/>
</dbReference>
<dbReference type="InterPro" id="IPR015421">
    <property type="entry name" value="PyrdxlP-dep_Trfase_major"/>
</dbReference>
<dbReference type="InterPro" id="IPR015422">
    <property type="entry name" value="PyrdxlP-dep_Trfase_small"/>
</dbReference>
<dbReference type="NCBIfam" id="TIGR01141">
    <property type="entry name" value="hisC"/>
    <property type="match status" value="1"/>
</dbReference>
<dbReference type="PANTHER" id="PTHR43643:SF3">
    <property type="entry name" value="HISTIDINOL-PHOSPHATE AMINOTRANSFERASE"/>
    <property type="match status" value="1"/>
</dbReference>
<dbReference type="PANTHER" id="PTHR43643">
    <property type="entry name" value="HISTIDINOL-PHOSPHATE AMINOTRANSFERASE 2"/>
    <property type="match status" value="1"/>
</dbReference>
<dbReference type="Pfam" id="PF00155">
    <property type="entry name" value="Aminotran_1_2"/>
    <property type="match status" value="1"/>
</dbReference>
<dbReference type="SUPFAM" id="SSF53383">
    <property type="entry name" value="PLP-dependent transferases"/>
    <property type="match status" value="1"/>
</dbReference>
<dbReference type="PROSITE" id="PS00599">
    <property type="entry name" value="AA_TRANSFER_CLASS_2"/>
    <property type="match status" value="1"/>
</dbReference>
<keyword id="KW-0028">Amino-acid biosynthesis</keyword>
<keyword id="KW-0032">Aminotransferase</keyword>
<keyword id="KW-0368">Histidine biosynthesis</keyword>
<keyword id="KW-0663">Pyridoxal phosphate</keyword>
<keyword id="KW-1185">Reference proteome</keyword>
<keyword id="KW-0808">Transferase</keyword>
<protein>
    <recommendedName>
        <fullName>Histidinol-phosphate aminotransferase 1</fullName>
        <ecNumber>2.6.1.9</ecNumber>
    </recommendedName>
    <alternativeName>
        <fullName>Imidazole acetol-phosphate transaminase 1</fullName>
    </alternativeName>
</protein>
<gene>
    <name type="primary">hisC1</name>
    <name type="ordered locus">PA4447</name>
</gene>
<proteinExistence type="inferred from homology"/>
<name>HIS81_PSEAE</name>
<reference key="1">
    <citation type="journal article" date="2000" name="Nature">
        <title>Complete genome sequence of Pseudomonas aeruginosa PAO1, an opportunistic pathogen.</title>
        <authorList>
            <person name="Stover C.K."/>
            <person name="Pham X.-Q.T."/>
            <person name="Erwin A.L."/>
            <person name="Mizoguchi S.D."/>
            <person name="Warrener P."/>
            <person name="Hickey M.J."/>
            <person name="Brinkman F.S.L."/>
            <person name="Hufnagle W.O."/>
            <person name="Kowalik D.J."/>
            <person name="Lagrou M."/>
            <person name="Garber R.L."/>
            <person name="Goltry L."/>
            <person name="Tolentino E."/>
            <person name="Westbrock-Wadman S."/>
            <person name="Yuan Y."/>
            <person name="Brody L.L."/>
            <person name="Coulter S.N."/>
            <person name="Folger K.R."/>
            <person name="Kas A."/>
            <person name="Larbig K."/>
            <person name="Lim R.M."/>
            <person name="Smith K.A."/>
            <person name="Spencer D.H."/>
            <person name="Wong G.K.-S."/>
            <person name="Wu Z."/>
            <person name="Paulsen I.T."/>
            <person name="Reizer J."/>
            <person name="Saier M.H. Jr."/>
            <person name="Hancock R.E.W."/>
            <person name="Lory S."/>
            <person name="Olson M.V."/>
        </authorList>
    </citation>
    <scope>NUCLEOTIDE SEQUENCE [LARGE SCALE GENOMIC DNA]</scope>
    <source>
        <strain>ATCC 15692 / DSM 22644 / CIP 104116 / JCM 14847 / LMG 12228 / 1C / PRS 101 / PAO1</strain>
    </source>
</reference>
<accession>Q9HVX0</accession>
<comment type="catalytic activity">
    <reaction>
        <text>L-histidinol phosphate + 2-oxoglutarate = 3-(imidazol-4-yl)-2-oxopropyl phosphate + L-glutamate</text>
        <dbReference type="Rhea" id="RHEA:23744"/>
        <dbReference type="ChEBI" id="CHEBI:16810"/>
        <dbReference type="ChEBI" id="CHEBI:29985"/>
        <dbReference type="ChEBI" id="CHEBI:57766"/>
        <dbReference type="ChEBI" id="CHEBI:57980"/>
        <dbReference type="EC" id="2.6.1.9"/>
    </reaction>
</comment>
<comment type="cofactor">
    <cofactor evidence="1">
        <name>pyridoxal 5'-phosphate</name>
        <dbReference type="ChEBI" id="CHEBI:597326"/>
    </cofactor>
</comment>
<comment type="pathway">
    <text>Amino-acid biosynthesis; L-histidine biosynthesis; L-histidine from 5-phospho-alpha-D-ribose 1-diphosphate: step 7/9.</text>
</comment>
<comment type="subunit">
    <text evidence="1">Homodimer.</text>
</comment>
<comment type="similarity">
    <text evidence="2">Belongs to the class-II pyridoxal-phosphate-dependent aminotransferase family. Histidinol-phosphate aminotransferase subfamily.</text>
</comment>
<organism>
    <name type="scientific">Pseudomonas aeruginosa (strain ATCC 15692 / DSM 22644 / CIP 104116 / JCM 14847 / LMG 12228 / 1C / PRS 101 / PAO1)</name>
    <dbReference type="NCBI Taxonomy" id="208964"/>
    <lineage>
        <taxon>Bacteria</taxon>
        <taxon>Pseudomonadati</taxon>
        <taxon>Pseudomonadota</taxon>
        <taxon>Gammaproteobacteria</taxon>
        <taxon>Pseudomonadales</taxon>
        <taxon>Pseudomonadaceae</taxon>
        <taxon>Pseudomonas</taxon>
    </lineage>
</organism>
<feature type="chain" id="PRO_0000153417" description="Histidinol-phosphate aminotransferase 1">
    <location>
        <begin position="1"/>
        <end position="351"/>
    </location>
</feature>
<feature type="modified residue" description="N6-(pyridoxal phosphate)lysine" evidence="1">
    <location>
        <position position="210"/>
    </location>
</feature>
<sequence length="351" mass="38655">MSKFWSPFVKDLVPYVPGEQPKLSRLVKLNTNENPYGPSPQALAAMQAELNDDLRLYPDPNGERLKQAVAAHYGVQANQVFVGNGSDEVLAHIFHGLFQHDLPLLFPDVTYSFYPVYCGLYGIAHEKIALDERFRIRVEDYARPNGGIIFPNPNAPTGCLLPLDAIEAMLKASPDSVVVVDEAYVDFGGESAIALVDRYPNLLVTQTLSKSRSLAGLRVGLAVGHADLVEALERIKNSFNSYPLDRLAIAGAAAAFEDDAYFRRTCQAVIDSREALSASLQALGFEVLPSAANFVFARHPRHDAGQIASTLREQGVIVRHFKQARIDQFLRITIGSPEQNQALLDALHFLK</sequence>
<evidence type="ECO:0000250" key="1"/>
<evidence type="ECO:0000305" key="2"/>